<name>DCD_NAUPA</name>
<evidence type="ECO:0000255" key="1">
    <source>
        <dbReference type="HAMAP-Rule" id="MF_00146"/>
    </source>
</evidence>
<organism>
    <name type="scientific">Nautilia profundicola (strain ATCC BAA-1463 / DSM 18972 / AmH)</name>
    <dbReference type="NCBI Taxonomy" id="598659"/>
    <lineage>
        <taxon>Bacteria</taxon>
        <taxon>Pseudomonadati</taxon>
        <taxon>Campylobacterota</taxon>
        <taxon>Epsilonproteobacteria</taxon>
        <taxon>Nautiliales</taxon>
        <taxon>Nautiliaceae</taxon>
        <taxon>Nautilia</taxon>
    </lineage>
</organism>
<dbReference type="EC" id="3.5.4.13" evidence="1"/>
<dbReference type="EMBL" id="CP001279">
    <property type="protein sequence ID" value="ACM93710.1"/>
    <property type="molecule type" value="Genomic_DNA"/>
</dbReference>
<dbReference type="RefSeq" id="WP_015902762.1">
    <property type="nucleotide sequence ID" value="NC_012115.1"/>
</dbReference>
<dbReference type="SMR" id="B9L789"/>
<dbReference type="STRING" id="598659.NAMH_0055"/>
<dbReference type="KEGG" id="nam:NAMH_0055"/>
<dbReference type="eggNOG" id="COG0717">
    <property type="taxonomic scope" value="Bacteria"/>
</dbReference>
<dbReference type="HOGENOM" id="CLU_087476_4_0_7"/>
<dbReference type="OrthoDB" id="9780956at2"/>
<dbReference type="UniPathway" id="UPA00610">
    <property type="reaction ID" value="UER00665"/>
</dbReference>
<dbReference type="Proteomes" id="UP000000448">
    <property type="component" value="Chromosome"/>
</dbReference>
<dbReference type="GO" id="GO:0008829">
    <property type="term" value="F:dCTP deaminase activity"/>
    <property type="evidence" value="ECO:0007669"/>
    <property type="project" value="UniProtKB-UniRule"/>
</dbReference>
<dbReference type="GO" id="GO:0000166">
    <property type="term" value="F:nucleotide binding"/>
    <property type="evidence" value="ECO:0007669"/>
    <property type="project" value="UniProtKB-KW"/>
</dbReference>
<dbReference type="GO" id="GO:0006226">
    <property type="term" value="P:dUMP biosynthetic process"/>
    <property type="evidence" value="ECO:0007669"/>
    <property type="project" value="UniProtKB-UniPathway"/>
</dbReference>
<dbReference type="GO" id="GO:0006229">
    <property type="term" value="P:dUTP biosynthetic process"/>
    <property type="evidence" value="ECO:0007669"/>
    <property type="project" value="UniProtKB-UniRule"/>
</dbReference>
<dbReference type="GO" id="GO:0015949">
    <property type="term" value="P:nucleobase-containing small molecule interconversion"/>
    <property type="evidence" value="ECO:0007669"/>
    <property type="project" value="TreeGrafter"/>
</dbReference>
<dbReference type="CDD" id="cd07557">
    <property type="entry name" value="trimeric_dUTPase"/>
    <property type="match status" value="1"/>
</dbReference>
<dbReference type="FunFam" id="2.70.40.10:FF:000001">
    <property type="entry name" value="dCTP deaminase"/>
    <property type="match status" value="1"/>
</dbReference>
<dbReference type="Gene3D" id="2.70.40.10">
    <property type="match status" value="1"/>
</dbReference>
<dbReference type="HAMAP" id="MF_00146">
    <property type="entry name" value="dCTP_deaminase"/>
    <property type="match status" value="1"/>
</dbReference>
<dbReference type="InterPro" id="IPR011962">
    <property type="entry name" value="dCTP_deaminase"/>
</dbReference>
<dbReference type="InterPro" id="IPR036157">
    <property type="entry name" value="dUTPase-like_sf"/>
</dbReference>
<dbReference type="InterPro" id="IPR033704">
    <property type="entry name" value="dUTPase_trimeric"/>
</dbReference>
<dbReference type="NCBIfam" id="TIGR02274">
    <property type="entry name" value="dCTP_deam"/>
    <property type="match status" value="1"/>
</dbReference>
<dbReference type="PANTHER" id="PTHR42680">
    <property type="entry name" value="DCTP DEAMINASE"/>
    <property type="match status" value="1"/>
</dbReference>
<dbReference type="PANTHER" id="PTHR42680:SF3">
    <property type="entry name" value="DCTP DEAMINASE"/>
    <property type="match status" value="1"/>
</dbReference>
<dbReference type="Pfam" id="PF22769">
    <property type="entry name" value="DCD"/>
    <property type="match status" value="1"/>
</dbReference>
<dbReference type="SUPFAM" id="SSF51283">
    <property type="entry name" value="dUTPase-like"/>
    <property type="match status" value="1"/>
</dbReference>
<proteinExistence type="inferred from homology"/>
<comment type="function">
    <text evidence="1">Catalyzes the deamination of dCTP to dUTP.</text>
</comment>
<comment type="catalytic activity">
    <reaction evidence="1">
        <text>dCTP + H2O + H(+) = dUTP + NH4(+)</text>
        <dbReference type="Rhea" id="RHEA:22680"/>
        <dbReference type="ChEBI" id="CHEBI:15377"/>
        <dbReference type="ChEBI" id="CHEBI:15378"/>
        <dbReference type="ChEBI" id="CHEBI:28938"/>
        <dbReference type="ChEBI" id="CHEBI:61481"/>
        <dbReference type="ChEBI" id="CHEBI:61555"/>
        <dbReference type="EC" id="3.5.4.13"/>
    </reaction>
</comment>
<comment type="pathway">
    <text evidence="1">Pyrimidine metabolism; dUMP biosynthesis; dUMP from dCTP (dUTP route): step 1/2.</text>
</comment>
<comment type="subunit">
    <text evidence="1">Homotrimer.</text>
</comment>
<comment type="similarity">
    <text evidence="1">Belongs to the dCTP deaminase family.</text>
</comment>
<sequence length="186" mass="20811">MGVKSDIWIRNMAKNFNMISPFEEKQVRKGIISYGVSSYGYDIRVSDEFMVFTNINSTVVDPKNFDERNVVNIKGDCIIPPNSFALCRSVEYFKMPRDVLAICVGKSTYARCGIIVNVTPIEPEWEGHITIEISNTTPLPAKIYANEGIAQLIFLGADDNICETSYADKSGKYHGQKGITLPKVDK</sequence>
<gene>
    <name evidence="1" type="primary">dcd</name>
    <name type="ordered locus">NAMH_0055</name>
</gene>
<accession>B9L789</accession>
<feature type="chain" id="PRO_1000123154" description="dCTP deaminase">
    <location>
        <begin position="1"/>
        <end position="186"/>
    </location>
</feature>
<feature type="active site" description="Proton donor/acceptor" evidence="1">
    <location>
        <position position="132"/>
    </location>
</feature>
<feature type="binding site" evidence="1">
    <location>
        <begin position="106"/>
        <end position="111"/>
    </location>
    <ligand>
        <name>dCTP</name>
        <dbReference type="ChEBI" id="CHEBI:61481"/>
    </ligand>
</feature>
<feature type="binding site" evidence="1">
    <location>
        <position position="151"/>
    </location>
    <ligand>
        <name>dCTP</name>
        <dbReference type="ChEBI" id="CHEBI:61481"/>
    </ligand>
</feature>
<feature type="binding site" evidence="1">
    <location>
        <position position="166"/>
    </location>
    <ligand>
        <name>dCTP</name>
        <dbReference type="ChEBI" id="CHEBI:61481"/>
    </ligand>
</feature>
<feature type="binding site" evidence="1">
    <location>
        <position position="176"/>
    </location>
    <ligand>
        <name>dCTP</name>
        <dbReference type="ChEBI" id="CHEBI:61481"/>
    </ligand>
</feature>
<reference key="1">
    <citation type="journal article" date="2009" name="PLoS Genet.">
        <title>Adaptations to submarine hydrothermal environments exemplified by the genome of Nautilia profundicola.</title>
        <authorList>
            <person name="Campbell B.J."/>
            <person name="Smith J.L."/>
            <person name="Hanson T.E."/>
            <person name="Klotz M.G."/>
            <person name="Stein L.Y."/>
            <person name="Lee C.K."/>
            <person name="Wu D."/>
            <person name="Robinson J.M."/>
            <person name="Khouri H.M."/>
            <person name="Eisen J.A."/>
            <person name="Cary S.C."/>
        </authorList>
    </citation>
    <scope>NUCLEOTIDE SEQUENCE [LARGE SCALE GENOMIC DNA]</scope>
    <source>
        <strain>ATCC BAA-1463 / DSM 18972 / AmH</strain>
    </source>
</reference>
<keyword id="KW-0378">Hydrolase</keyword>
<keyword id="KW-0546">Nucleotide metabolism</keyword>
<keyword id="KW-0547">Nucleotide-binding</keyword>
<protein>
    <recommendedName>
        <fullName evidence="1">dCTP deaminase</fullName>
        <ecNumber evidence="1">3.5.4.13</ecNumber>
    </recommendedName>
    <alternativeName>
        <fullName evidence="1">Deoxycytidine triphosphate deaminase</fullName>
    </alternativeName>
</protein>